<evidence type="ECO:0000250" key="1">
    <source>
        <dbReference type="UniProtKB" id="P02244"/>
    </source>
</evidence>
<evidence type="ECO:0000305" key="2"/>
<organism>
    <name type="scientific">Lingula anatina</name>
    <name type="common">Brachiopod</name>
    <name type="synonym">Lingula unguis</name>
    <dbReference type="NCBI Taxonomy" id="7574"/>
    <lineage>
        <taxon>Eukaryota</taxon>
        <taxon>Metazoa</taxon>
        <taxon>Spiralia</taxon>
        <taxon>Lophotrochozoa</taxon>
        <taxon>Brachiopoda</taxon>
        <taxon>Linguliformea</taxon>
        <taxon>Lingulata</taxon>
        <taxon>Lingulida</taxon>
        <taxon>Linguloidea</taxon>
        <taxon>Lingulidae</taxon>
        <taxon>Lingula</taxon>
    </lineage>
</organism>
<proteinExistence type="evidence at protein level"/>
<protein>
    <recommendedName>
        <fullName>Hemerythrin subunit beta</fullName>
    </recommendedName>
</protein>
<keyword id="KW-0903">Direct protein sequencing</keyword>
<keyword id="KW-0408">Iron</keyword>
<keyword id="KW-0479">Metal-binding</keyword>
<keyword id="KW-0561">Oxygen transport</keyword>
<keyword id="KW-1185">Reference proteome</keyword>
<keyword id="KW-0813">Transport</keyword>
<dbReference type="PIR" id="S17530">
    <property type="entry name" value="JT0560"/>
</dbReference>
<dbReference type="SMR" id="P22765"/>
<dbReference type="InParanoid" id="P22765"/>
<dbReference type="Proteomes" id="UP000085678">
    <property type="component" value="Unplaced"/>
</dbReference>
<dbReference type="GO" id="GO:0005506">
    <property type="term" value="F:iron ion binding"/>
    <property type="evidence" value="ECO:0007669"/>
    <property type="project" value="InterPro"/>
</dbReference>
<dbReference type="GO" id="GO:0005344">
    <property type="term" value="F:oxygen carrier activity"/>
    <property type="evidence" value="ECO:0007669"/>
    <property type="project" value="UniProtKB-KW"/>
</dbReference>
<dbReference type="CDD" id="cd12107">
    <property type="entry name" value="Hemerythrin"/>
    <property type="match status" value="1"/>
</dbReference>
<dbReference type="Gene3D" id="1.20.120.50">
    <property type="entry name" value="Hemerythrin-like"/>
    <property type="match status" value="1"/>
</dbReference>
<dbReference type="InterPro" id="IPR002063">
    <property type="entry name" value="Haemerythrin"/>
</dbReference>
<dbReference type="InterPro" id="IPR016131">
    <property type="entry name" value="Haemerythrin_Fe_BS"/>
</dbReference>
<dbReference type="InterPro" id="IPR050669">
    <property type="entry name" value="Hemerythrin"/>
</dbReference>
<dbReference type="InterPro" id="IPR012312">
    <property type="entry name" value="Hemerythrin-like"/>
</dbReference>
<dbReference type="InterPro" id="IPR035938">
    <property type="entry name" value="Hemerythrin-like_sf"/>
</dbReference>
<dbReference type="InterPro" id="IPR012827">
    <property type="entry name" value="Hemerythrin_metal-bd"/>
</dbReference>
<dbReference type="NCBIfam" id="TIGR02481">
    <property type="entry name" value="hemeryth_dom"/>
    <property type="match status" value="1"/>
</dbReference>
<dbReference type="NCBIfam" id="TIGR00058">
    <property type="entry name" value="Hemerythrin"/>
    <property type="match status" value="1"/>
</dbReference>
<dbReference type="PANTHER" id="PTHR37164">
    <property type="entry name" value="BACTERIOHEMERYTHRIN"/>
    <property type="match status" value="1"/>
</dbReference>
<dbReference type="PANTHER" id="PTHR37164:SF1">
    <property type="entry name" value="BACTERIOHEMERYTHRIN"/>
    <property type="match status" value="1"/>
</dbReference>
<dbReference type="Pfam" id="PF01814">
    <property type="entry name" value="Hemerythrin"/>
    <property type="match status" value="1"/>
</dbReference>
<dbReference type="PIRSF" id="PIRSF002033">
    <property type="entry name" value="Hemerythrin"/>
    <property type="match status" value="1"/>
</dbReference>
<dbReference type="PRINTS" id="PR00186">
    <property type="entry name" value="HEMERYTHRIN"/>
</dbReference>
<dbReference type="SUPFAM" id="SSF47188">
    <property type="entry name" value="Hemerythrin-like"/>
    <property type="match status" value="1"/>
</dbReference>
<dbReference type="PROSITE" id="PS00550">
    <property type="entry name" value="HEMERYTHRINS"/>
    <property type="match status" value="1"/>
</dbReference>
<comment type="function">
    <text>Hemerythrin is a respiratory protein in blood cells of certain marine worms. The oxygen-binding site in each chain contains two iron atoms.</text>
</comment>
<comment type="subunit">
    <text>Octamer composed of two types of chains: alpha and beta.</text>
</comment>
<comment type="similarity">
    <text evidence="2">Belongs to the hemerythrin family.</text>
</comment>
<reference key="1">
    <citation type="journal article" date="1991" name="Protein Seq. Data Anal.">
        <title>The amino acid sequence of the beta chain of hemerythrin from Lingula unguis.</title>
        <authorList>
            <person name="Yano H."/>
            <person name="Satake K."/>
            <person name="Ueno Y."/>
            <person name="Tsugita A."/>
        </authorList>
    </citation>
    <scope>PROTEIN SEQUENCE</scope>
</reference>
<reference key="2">
    <citation type="journal article" date="1990" name="Protein Seq. Data Anal.">
        <title>Hemerythrin from Lingula unguis consists of two different subunits, alpha and beta.</title>
        <authorList>
            <person name="Satake K."/>
            <person name="Yugi M."/>
            <person name="Kamo M."/>
            <person name="Kihara H."/>
            <person name="Tsugita A."/>
        </authorList>
    </citation>
    <scope>PROTEIN SEQUENCE OF 1-30 AND 110-117</scope>
</reference>
<feature type="chain" id="PRO_0000191831" description="Hemerythrin subunit beta">
    <location>
        <begin position="1"/>
        <end position="117"/>
    </location>
</feature>
<feature type="binding site" evidence="1">
    <location>
        <position position="24"/>
    </location>
    <ligand>
        <name>Fe cation</name>
        <dbReference type="ChEBI" id="CHEBI:24875"/>
        <label>1</label>
    </ligand>
</feature>
<feature type="binding site" evidence="1">
    <location>
        <position position="53"/>
    </location>
    <ligand>
        <name>Fe cation</name>
        <dbReference type="ChEBI" id="CHEBI:24875"/>
        <label>1</label>
    </ligand>
</feature>
<feature type="binding site" evidence="1">
    <location>
        <position position="57"/>
    </location>
    <ligand>
        <name>Fe cation</name>
        <dbReference type="ChEBI" id="CHEBI:24875"/>
        <label>1</label>
    </ligand>
</feature>
<feature type="binding site" evidence="1">
    <location>
        <position position="57"/>
    </location>
    <ligand>
        <name>Fe cation</name>
        <dbReference type="ChEBI" id="CHEBI:24875"/>
        <label>2</label>
    </ligand>
</feature>
<feature type="binding site" evidence="1">
    <location>
        <position position="72"/>
    </location>
    <ligand>
        <name>Fe cation</name>
        <dbReference type="ChEBI" id="CHEBI:24875"/>
        <label>2</label>
    </ligand>
</feature>
<feature type="binding site" evidence="1">
    <location>
        <position position="76"/>
    </location>
    <ligand>
        <name>Fe cation</name>
        <dbReference type="ChEBI" id="CHEBI:24875"/>
        <label>2</label>
    </ligand>
</feature>
<feature type="binding site" evidence="1">
    <location>
        <position position="105"/>
    </location>
    <ligand>
        <name>Fe cation</name>
        <dbReference type="ChEBI" id="CHEBI:24875"/>
        <label>2</label>
    </ligand>
</feature>
<feature type="binding site" evidence="1">
    <location>
        <position position="110"/>
    </location>
    <ligand>
        <name>Fe cation</name>
        <dbReference type="ChEBI" id="CHEBI:24875"/>
        <label>1</label>
    </ligand>
</feature>
<feature type="binding site" evidence="1">
    <location>
        <position position="110"/>
    </location>
    <ligand>
        <name>Fe cation</name>
        <dbReference type="ChEBI" id="CHEBI:24875"/>
        <label>2</label>
    </ligand>
</feature>
<sequence>MKIPVPYAWTPDFKTTYENIDSEHRTLFNGLFALSEFNTQHQLNAAIEVFTLHFHDEQGQMIRSNYVNTKEHTDIHNGFMDTMRGWQSPVPQKALKDGMEWLANHIPTEDFKYKGKL</sequence>
<accession>P22765</accession>
<name>HEMTB_LINAN</name>